<feature type="chain" id="PRO_0000329102" description="Aspartate carbamoyltransferase catalytic subunit">
    <location>
        <begin position="1"/>
        <end position="343"/>
    </location>
</feature>
<feature type="binding site" evidence="1">
    <location>
        <position position="91"/>
    </location>
    <ligand>
        <name>carbamoyl phosphate</name>
        <dbReference type="ChEBI" id="CHEBI:58228"/>
    </ligand>
</feature>
<feature type="binding site" evidence="1">
    <location>
        <position position="92"/>
    </location>
    <ligand>
        <name>carbamoyl phosphate</name>
        <dbReference type="ChEBI" id="CHEBI:58228"/>
    </ligand>
</feature>
<feature type="binding site" evidence="1">
    <location>
        <position position="119"/>
    </location>
    <ligand>
        <name>L-aspartate</name>
        <dbReference type="ChEBI" id="CHEBI:29991"/>
    </ligand>
</feature>
<feature type="binding site" evidence="1">
    <location>
        <position position="141"/>
    </location>
    <ligand>
        <name>carbamoyl phosphate</name>
        <dbReference type="ChEBI" id="CHEBI:58228"/>
    </ligand>
</feature>
<feature type="binding site" evidence="1">
    <location>
        <position position="171"/>
    </location>
    <ligand>
        <name>carbamoyl phosphate</name>
        <dbReference type="ChEBI" id="CHEBI:58228"/>
    </ligand>
</feature>
<feature type="binding site" evidence="1">
    <location>
        <position position="174"/>
    </location>
    <ligand>
        <name>carbamoyl phosphate</name>
        <dbReference type="ChEBI" id="CHEBI:58228"/>
    </ligand>
</feature>
<feature type="binding site" evidence="1">
    <location>
        <position position="204"/>
    </location>
    <ligand>
        <name>L-aspartate</name>
        <dbReference type="ChEBI" id="CHEBI:29991"/>
    </ligand>
</feature>
<feature type="binding site" evidence="1">
    <location>
        <position position="259"/>
    </location>
    <ligand>
        <name>L-aspartate</name>
        <dbReference type="ChEBI" id="CHEBI:29991"/>
    </ligand>
</feature>
<feature type="binding site" evidence="1">
    <location>
        <position position="300"/>
    </location>
    <ligand>
        <name>carbamoyl phosphate</name>
        <dbReference type="ChEBI" id="CHEBI:58228"/>
    </ligand>
</feature>
<feature type="binding site" evidence="1">
    <location>
        <position position="301"/>
    </location>
    <ligand>
        <name>carbamoyl phosphate</name>
        <dbReference type="ChEBI" id="CHEBI:58228"/>
    </ligand>
</feature>
<dbReference type="EC" id="2.1.3.2" evidence="1"/>
<dbReference type="EMBL" id="CP000570">
    <property type="protein sequence ID" value="ABN82512.1"/>
    <property type="status" value="ALT_INIT"/>
    <property type="molecule type" value="Genomic_DNA"/>
</dbReference>
<dbReference type="RefSeq" id="WP_004534003.1">
    <property type="nucleotide sequence ID" value="NC_009074.1"/>
</dbReference>
<dbReference type="SMR" id="A3NCQ0"/>
<dbReference type="KEGG" id="bpd:BURPS668_3109"/>
<dbReference type="HOGENOM" id="CLU_043846_2_0_4"/>
<dbReference type="UniPathway" id="UPA00070">
    <property type="reaction ID" value="UER00116"/>
</dbReference>
<dbReference type="GO" id="GO:0005829">
    <property type="term" value="C:cytosol"/>
    <property type="evidence" value="ECO:0007669"/>
    <property type="project" value="TreeGrafter"/>
</dbReference>
<dbReference type="GO" id="GO:0016597">
    <property type="term" value="F:amino acid binding"/>
    <property type="evidence" value="ECO:0007669"/>
    <property type="project" value="InterPro"/>
</dbReference>
<dbReference type="GO" id="GO:0004070">
    <property type="term" value="F:aspartate carbamoyltransferase activity"/>
    <property type="evidence" value="ECO:0007669"/>
    <property type="project" value="UniProtKB-UniRule"/>
</dbReference>
<dbReference type="GO" id="GO:0006207">
    <property type="term" value="P:'de novo' pyrimidine nucleobase biosynthetic process"/>
    <property type="evidence" value="ECO:0007669"/>
    <property type="project" value="InterPro"/>
</dbReference>
<dbReference type="GO" id="GO:0044205">
    <property type="term" value="P:'de novo' UMP biosynthetic process"/>
    <property type="evidence" value="ECO:0007669"/>
    <property type="project" value="UniProtKB-UniRule"/>
</dbReference>
<dbReference type="GO" id="GO:0006520">
    <property type="term" value="P:amino acid metabolic process"/>
    <property type="evidence" value="ECO:0007669"/>
    <property type="project" value="InterPro"/>
</dbReference>
<dbReference type="FunFam" id="3.40.50.1370:FF:000007">
    <property type="entry name" value="Aspartate carbamoyltransferase"/>
    <property type="match status" value="1"/>
</dbReference>
<dbReference type="Gene3D" id="3.40.50.1370">
    <property type="entry name" value="Aspartate/ornithine carbamoyltransferase"/>
    <property type="match status" value="2"/>
</dbReference>
<dbReference type="HAMAP" id="MF_00001">
    <property type="entry name" value="Asp_carb_tr"/>
    <property type="match status" value="1"/>
</dbReference>
<dbReference type="InterPro" id="IPR006132">
    <property type="entry name" value="Asp/Orn_carbamoyltranf_P-bd"/>
</dbReference>
<dbReference type="InterPro" id="IPR006130">
    <property type="entry name" value="Asp/Orn_carbamoylTrfase"/>
</dbReference>
<dbReference type="InterPro" id="IPR036901">
    <property type="entry name" value="Asp/Orn_carbamoylTrfase_sf"/>
</dbReference>
<dbReference type="InterPro" id="IPR002082">
    <property type="entry name" value="Asp_carbamoyltransf"/>
</dbReference>
<dbReference type="InterPro" id="IPR006131">
    <property type="entry name" value="Asp_carbamoyltransf_Asp/Orn-bd"/>
</dbReference>
<dbReference type="NCBIfam" id="TIGR00670">
    <property type="entry name" value="asp_carb_tr"/>
    <property type="match status" value="1"/>
</dbReference>
<dbReference type="NCBIfam" id="NF002032">
    <property type="entry name" value="PRK00856.1"/>
    <property type="match status" value="1"/>
</dbReference>
<dbReference type="PANTHER" id="PTHR45753:SF6">
    <property type="entry name" value="ASPARTATE CARBAMOYLTRANSFERASE"/>
    <property type="match status" value="1"/>
</dbReference>
<dbReference type="PANTHER" id="PTHR45753">
    <property type="entry name" value="ORNITHINE CARBAMOYLTRANSFERASE, MITOCHONDRIAL"/>
    <property type="match status" value="1"/>
</dbReference>
<dbReference type="Pfam" id="PF00185">
    <property type="entry name" value="OTCace"/>
    <property type="match status" value="1"/>
</dbReference>
<dbReference type="Pfam" id="PF02729">
    <property type="entry name" value="OTCace_N"/>
    <property type="match status" value="1"/>
</dbReference>
<dbReference type="PRINTS" id="PR00100">
    <property type="entry name" value="AOTCASE"/>
</dbReference>
<dbReference type="PRINTS" id="PR00101">
    <property type="entry name" value="ATCASE"/>
</dbReference>
<dbReference type="SUPFAM" id="SSF53671">
    <property type="entry name" value="Aspartate/ornithine carbamoyltransferase"/>
    <property type="match status" value="1"/>
</dbReference>
<dbReference type="PROSITE" id="PS00097">
    <property type="entry name" value="CARBAMOYLTRANSFERASE"/>
    <property type="match status" value="1"/>
</dbReference>
<evidence type="ECO:0000255" key="1">
    <source>
        <dbReference type="HAMAP-Rule" id="MF_00001"/>
    </source>
</evidence>
<evidence type="ECO:0000305" key="2"/>
<sequence length="343" mass="37387">MTTDTSGRTGNPAAAAPAERFRYGFLKGNPQLTKNGELKHLLTIEGLPRAILNQILDTAEQFVSVTDREVKKVPLLRGKSVFNLFFENSTRTRTTFEIAAKRLSADVINLNINASSTSKGESLLDTINNLSAMHADLFVVRHASSGAPYLIAEHCAPHVHVINAGDGRHAHPTQGLLDMYTIRHYKRDFTKLRVAIVGDILHSRVARSDIHALTTLGVPEVRAIGPRTLLPGGLEQMGVRVFHNLDEGLRDVDVIIMLRLQNERMSGALLPSAQEYFKSWGLTPERLALAAPDAIVMHPGPMNRGVEIDSQVADGPQSVILNQVTFGIAVRMAVMGIVAGTSD</sequence>
<keyword id="KW-0665">Pyrimidine biosynthesis</keyword>
<keyword id="KW-0808">Transferase</keyword>
<accession>A3NCQ0</accession>
<gene>
    <name evidence="1" type="primary">pyrB</name>
    <name type="ordered locus">BURPS668_3109</name>
</gene>
<organism>
    <name type="scientific">Burkholderia pseudomallei (strain 668)</name>
    <dbReference type="NCBI Taxonomy" id="320373"/>
    <lineage>
        <taxon>Bacteria</taxon>
        <taxon>Pseudomonadati</taxon>
        <taxon>Pseudomonadota</taxon>
        <taxon>Betaproteobacteria</taxon>
        <taxon>Burkholderiales</taxon>
        <taxon>Burkholderiaceae</taxon>
        <taxon>Burkholderia</taxon>
        <taxon>pseudomallei group</taxon>
    </lineage>
</organism>
<name>PYRB_BURP6</name>
<proteinExistence type="inferred from homology"/>
<reference key="1">
    <citation type="journal article" date="2010" name="Genome Biol. Evol.">
        <title>Continuing evolution of Burkholderia mallei through genome reduction and large-scale rearrangements.</title>
        <authorList>
            <person name="Losada L."/>
            <person name="Ronning C.M."/>
            <person name="DeShazer D."/>
            <person name="Woods D."/>
            <person name="Fedorova N."/>
            <person name="Kim H.S."/>
            <person name="Shabalina S.A."/>
            <person name="Pearson T.R."/>
            <person name="Brinkac L."/>
            <person name="Tan P."/>
            <person name="Nandi T."/>
            <person name="Crabtree J."/>
            <person name="Badger J."/>
            <person name="Beckstrom-Sternberg S."/>
            <person name="Saqib M."/>
            <person name="Schutzer S.E."/>
            <person name="Keim P."/>
            <person name="Nierman W.C."/>
        </authorList>
    </citation>
    <scope>NUCLEOTIDE SEQUENCE [LARGE SCALE GENOMIC DNA]</scope>
    <source>
        <strain>668</strain>
    </source>
</reference>
<comment type="function">
    <text evidence="1">Catalyzes the condensation of carbamoyl phosphate and aspartate to form carbamoyl aspartate and inorganic phosphate, the committed step in the de novo pyrimidine nucleotide biosynthesis pathway.</text>
</comment>
<comment type="catalytic activity">
    <reaction evidence="1">
        <text>carbamoyl phosphate + L-aspartate = N-carbamoyl-L-aspartate + phosphate + H(+)</text>
        <dbReference type="Rhea" id="RHEA:20013"/>
        <dbReference type="ChEBI" id="CHEBI:15378"/>
        <dbReference type="ChEBI" id="CHEBI:29991"/>
        <dbReference type="ChEBI" id="CHEBI:32814"/>
        <dbReference type="ChEBI" id="CHEBI:43474"/>
        <dbReference type="ChEBI" id="CHEBI:58228"/>
        <dbReference type="EC" id="2.1.3.2"/>
    </reaction>
</comment>
<comment type="pathway">
    <text evidence="1">Pyrimidine metabolism; UMP biosynthesis via de novo pathway; (S)-dihydroorotate from bicarbonate: step 2/3.</text>
</comment>
<comment type="subunit">
    <text evidence="1">Heterododecamer (2C3:3R2) of six catalytic PyrB chains organized as two trimers (C3), and six regulatory PyrI chains organized as three dimers (R2).</text>
</comment>
<comment type="similarity">
    <text evidence="1">Belongs to the aspartate/ornithine carbamoyltransferase superfamily. ATCase family.</text>
</comment>
<comment type="sequence caution" evidence="2">
    <conflict type="erroneous initiation">
        <sequence resource="EMBL-CDS" id="ABN82512"/>
    </conflict>
</comment>
<protein>
    <recommendedName>
        <fullName evidence="1">Aspartate carbamoyltransferase catalytic subunit</fullName>
        <ecNumber evidence="1">2.1.3.2</ecNumber>
    </recommendedName>
    <alternativeName>
        <fullName evidence="1">Aspartate transcarbamylase</fullName>
        <shortName evidence="1">ATCase</shortName>
    </alternativeName>
</protein>